<dbReference type="EC" id="2.7.1.50" evidence="1"/>
<dbReference type="EMBL" id="CP000813">
    <property type="protein sequence ID" value="ABV64134.1"/>
    <property type="molecule type" value="Genomic_DNA"/>
</dbReference>
<dbReference type="RefSeq" id="WP_012011689.1">
    <property type="nucleotide sequence ID" value="NZ_VEIS01000002.1"/>
</dbReference>
<dbReference type="SMR" id="A8FIR7"/>
<dbReference type="STRING" id="315750.BPUM_3484"/>
<dbReference type="GeneID" id="5622773"/>
<dbReference type="KEGG" id="bpu:BPUM_3484"/>
<dbReference type="eggNOG" id="COG2145">
    <property type="taxonomic scope" value="Bacteria"/>
</dbReference>
<dbReference type="HOGENOM" id="CLU_019943_0_1_9"/>
<dbReference type="OrthoDB" id="9778146at2"/>
<dbReference type="UniPathway" id="UPA00060">
    <property type="reaction ID" value="UER00139"/>
</dbReference>
<dbReference type="Proteomes" id="UP000001355">
    <property type="component" value="Chromosome"/>
</dbReference>
<dbReference type="GO" id="GO:0005829">
    <property type="term" value="C:cytosol"/>
    <property type="evidence" value="ECO:0007669"/>
    <property type="project" value="TreeGrafter"/>
</dbReference>
<dbReference type="GO" id="GO:0005524">
    <property type="term" value="F:ATP binding"/>
    <property type="evidence" value="ECO:0007669"/>
    <property type="project" value="UniProtKB-UniRule"/>
</dbReference>
<dbReference type="GO" id="GO:0004417">
    <property type="term" value="F:hydroxyethylthiazole kinase activity"/>
    <property type="evidence" value="ECO:0007669"/>
    <property type="project" value="UniProtKB-UniRule"/>
</dbReference>
<dbReference type="GO" id="GO:0008902">
    <property type="term" value="F:hydroxymethylpyrimidine kinase activity"/>
    <property type="evidence" value="ECO:0007669"/>
    <property type="project" value="TreeGrafter"/>
</dbReference>
<dbReference type="GO" id="GO:0000287">
    <property type="term" value="F:magnesium ion binding"/>
    <property type="evidence" value="ECO:0007669"/>
    <property type="project" value="UniProtKB-UniRule"/>
</dbReference>
<dbReference type="GO" id="GO:0008972">
    <property type="term" value="F:phosphomethylpyrimidine kinase activity"/>
    <property type="evidence" value="ECO:0007669"/>
    <property type="project" value="TreeGrafter"/>
</dbReference>
<dbReference type="GO" id="GO:0009228">
    <property type="term" value="P:thiamine biosynthetic process"/>
    <property type="evidence" value="ECO:0007669"/>
    <property type="project" value="UniProtKB-KW"/>
</dbReference>
<dbReference type="GO" id="GO:0009229">
    <property type="term" value="P:thiamine diphosphate biosynthetic process"/>
    <property type="evidence" value="ECO:0007669"/>
    <property type="project" value="UniProtKB-UniRule"/>
</dbReference>
<dbReference type="CDD" id="cd01170">
    <property type="entry name" value="THZ_kinase"/>
    <property type="match status" value="1"/>
</dbReference>
<dbReference type="Gene3D" id="3.40.1190.20">
    <property type="match status" value="1"/>
</dbReference>
<dbReference type="HAMAP" id="MF_00228">
    <property type="entry name" value="Thz_kinase"/>
    <property type="match status" value="1"/>
</dbReference>
<dbReference type="InterPro" id="IPR000417">
    <property type="entry name" value="Hyethyz_kinase"/>
</dbReference>
<dbReference type="InterPro" id="IPR029056">
    <property type="entry name" value="Ribokinase-like"/>
</dbReference>
<dbReference type="NCBIfam" id="NF006830">
    <property type="entry name" value="PRK09355.1"/>
    <property type="match status" value="1"/>
</dbReference>
<dbReference type="NCBIfam" id="TIGR00694">
    <property type="entry name" value="thiM"/>
    <property type="match status" value="1"/>
</dbReference>
<dbReference type="PANTHER" id="PTHR20858:SF17">
    <property type="entry name" value="HYDROXYMETHYLPYRIMIDINE_PHOSPHOMETHYLPYRIMIDINE KINASE THI20-RELATED"/>
    <property type="match status" value="1"/>
</dbReference>
<dbReference type="PANTHER" id="PTHR20858">
    <property type="entry name" value="PHOSPHOMETHYLPYRIMIDINE KINASE"/>
    <property type="match status" value="1"/>
</dbReference>
<dbReference type="Pfam" id="PF02110">
    <property type="entry name" value="HK"/>
    <property type="match status" value="1"/>
</dbReference>
<dbReference type="PIRSF" id="PIRSF000513">
    <property type="entry name" value="Thz_kinase"/>
    <property type="match status" value="1"/>
</dbReference>
<dbReference type="PRINTS" id="PR01099">
    <property type="entry name" value="HYETHTZKNASE"/>
</dbReference>
<dbReference type="SUPFAM" id="SSF53613">
    <property type="entry name" value="Ribokinase-like"/>
    <property type="match status" value="1"/>
</dbReference>
<name>THIM_BACP2</name>
<accession>A8FIR7</accession>
<keyword id="KW-0067">ATP-binding</keyword>
<keyword id="KW-0418">Kinase</keyword>
<keyword id="KW-0460">Magnesium</keyword>
<keyword id="KW-0479">Metal-binding</keyword>
<keyword id="KW-0547">Nucleotide-binding</keyword>
<keyword id="KW-0784">Thiamine biosynthesis</keyword>
<keyword id="KW-0808">Transferase</keyword>
<sequence length="271" mass="28236">MKTSIASHLLEKVRAENPLVHNITNQVVTNFTANGLLALGASPVMANAKEEVAEMAQLADALVLNIGTLTKETVESMILAGQSANKKGIPVLLDPVGVGATTFRLKAAKQLLEQVNITVVRGNAAEIAHLLEVDGWESKGVDAKAANGDVSALVKQAAKTLQTVVVITGEVDVVSDGEDVLSIHNGHEWLTKVTGTGCLLTSVIGAFCAAGERPLHASAAALLFYGVAAEKAAQYTQNKGPGTFQMELLNALSHTTGNDVLTLGKIGRNVT</sequence>
<feature type="chain" id="PRO_1000058758" description="Hydroxyethylthiazole kinase">
    <location>
        <begin position="1"/>
        <end position="271"/>
    </location>
</feature>
<feature type="binding site" evidence="1">
    <location>
        <position position="45"/>
    </location>
    <ligand>
        <name>substrate</name>
    </ligand>
</feature>
<feature type="binding site" evidence="1">
    <location>
        <position position="121"/>
    </location>
    <ligand>
        <name>ATP</name>
        <dbReference type="ChEBI" id="CHEBI:30616"/>
    </ligand>
</feature>
<feature type="binding site" evidence="1">
    <location>
        <position position="168"/>
    </location>
    <ligand>
        <name>ATP</name>
        <dbReference type="ChEBI" id="CHEBI:30616"/>
    </ligand>
</feature>
<feature type="binding site" evidence="1">
    <location>
        <position position="195"/>
    </location>
    <ligand>
        <name>substrate</name>
    </ligand>
</feature>
<protein>
    <recommendedName>
        <fullName evidence="1">Hydroxyethylthiazole kinase</fullName>
        <ecNumber evidence="1">2.7.1.50</ecNumber>
    </recommendedName>
    <alternativeName>
        <fullName evidence="1">4-methyl-5-beta-hydroxyethylthiazole kinase</fullName>
        <shortName evidence="1">TH kinase</shortName>
        <shortName evidence="1">Thz kinase</shortName>
    </alternativeName>
</protein>
<evidence type="ECO:0000255" key="1">
    <source>
        <dbReference type="HAMAP-Rule" id="MF_00228"/>
    </source>
</evidence>
<reference key="1">
    <citation type="journal article" date="2007" name="PLoS ONE">
        <title>Paradoxical DNA repair and peroxide resistance gene conservation in Bacillus pumilus SAFR-032.</title>
        <authorList>
            <person name="Gioia J."/>
            <person name="Yerrapragada S."/>
            <person name="Qin X."/>
            <person name="Jiang H."/>
            <person name="Igboeli O.C."/>
            <person name="Muzny D."/>
            <person name="Dugan-Rocha S."/>
            <person name="Ding Y."/>
            <person name="Hawes A."/>
            <person name="Liu W."/>
            <person name="Perez L."/>
            <person name="Kovar C."/>
            <person name="Dinh H."/>
            <person name="Lee S."/>
            <person name="Nazareth L."/>
            <person name="Blyth P."/>
            <person name="Holder M."/>
            <person name="Buhay C."/>
            <person name="Tirumalai M.R."/>
            <person name="Liu Y."/>
            <person name="Dasgupta I."/>
            <person name="Bokhetache L."/>
            <person name="Fujita M."/>
            <person name="Karouia F."/>
            <person name="Eswara Moorthy P."/>
            <person name="Siefert J."/>
            <person name="Uzman A."/>
            <person name="Buzumbo P."/>
            <person name="Verma A."/>
            <person name="Zwiya H."/>
            <person name="McWilliams B.D."/>
            <person name="Olowu A."/>
            <person name="Clinkenbeard K.D."/>
            <person name="Newcombe D."/>
            <person name="Golebiewski L."/>
            <person name="Petrosino J.F."/>
            <person name="Nicholson W.L."/>
            <person name="Fox G.E."/>
            <person name="Venkateswaran K."/>
            <person name="Highlander S.K."/>
            <person name="Weinstock G.M."/>
        </authorList>
    </citation>
    <scope>NUCLEOTIDE SEQUENCE [LARGE SCALE GENOMIC DNA]</scope>
    <source>
        <strain>SAFR-032</strain>
    </source>
</reference>
<proteinExistence type="inferred from homology"/>
<comment type="function">
    <text evidence="1">Catalyzes the phosphorylation of the hydroxyl group of 4-methyl-5-beta-hydroxyethylthiazole (THZ).</text>
</comment>
<comment type="catalytic activity">
    <reaction evidence="1">
        <text>5-(2-hydroxyethyl)-4-methylthiazole + ATP = 4-methyl-5-(2-phosphooxyethyl)-thiazole + ADP + H(+)</text>
        <dbReference type="Rhea" id="RHEA:24212"/>
        <dbReference type="ChEBI" id="CHEBI:15378"/>
        <dbReference type="ChEBI" id="CHEBI:17957"/>
        <dbReference type="ChEBI" id="CHEBI:30616"/>
        <dbReference type="ChEBI" id="CHEBI:58296"/>
        <dbReference type="ChEBI" id="CHEBI:456216"/>
        <dbReference type="EC" id="2.7.1.50"/>
    </reaction>
</comment>
<comment type="cofactor">
    <cofactor evidence="1">
        <name>Mg(2+)</name>
        <dbReference type="ChEBI" id="CHEBI:18420"/>
    </cofactor>
</comment>
<comment type="pathway">
    <text evidence="1">Cofactor biosynthesis; thiamine diphosphate biosynthesis; 4-methyl-5-(2-phosphoethyl)-thiazole from 5-(2-hydroxyethyl)-4-methylthiazole: step 1/1.</text>
</comment>
<comment type="similarity">
    <text evidence="1">Belongs to the Thz kinase family.</text>
</comment>
<gene>
    <name evidence="1" type="primary">thiM</name>
    <name type="ordered locus">BPUM_3484</name>
</gene>
<organism>
    <name type="scientific">Bacillus pumilus (strain SAFR-032)</name>
    <dbReference type="NCBI Taxonomy" id="315750"/>
    <lineage>
        <taxon>Bacteria</taxon>
        <taxon>Bacillati</taxon>
        <taxon>Bacillota</taxon>
        <taxon>Bacilli</taxon>
        <taxon>Bacillales</taxon>
        <taxon>Bacillaceae</taxon>
        <taxon>Bacillus</taxon>
    </lineage>
</organism>